<gene>
    <name type="ordered locus">Mlg_2205</name>
</gene>
<comment type="similarity">
    <text evidence="1">Belongs to the UPF0102 family.</text>
</comment>
<evidence type="ECO:0000255" key="1">
    <source>
        <dbReference type="HAMAP-Rule" id="MF_00048"/>
    </source>
</evidence>
<dbReference type="EMBL" id="CP000453">
    <property type="protein sequence ID" value="ABI57547.1"/>
    <property type="molecule type" value="Genomic_DNA"/>
</dbReference>
<dbReference type="RefSeq" id="WP_011629941.1">
    <property type="nucleotide sequence ID" value="NC_008340.1"/>
</dbReference>
<dbReference type="SMR" id="Q0A6J0"/>
<dbReference type="KEGG" id="aeh:Mlg_2205"/>
<dbReference type="eggNOG" id="COG0792">
    <property type="taxonomic scope" value="Bacteria"/>
</dbReference>
<dbReference type="HOGENOM" id="CLU_115353_1_0_6"/>
<dbReference type="OrthoDB" id="9794876at2"/>
<dbReference type="Proteomes" id="UP000001962">
    <property type="component" value="Chromosome"/>
</dbReference>
<dbReference type="GO" id="GO:0003676">
    <property type="term" value="F:nucleic acid binding"/>
    <property type="evidence" value="ECO:0007669"/>
    <property type="project" value="InterPro"/>
</dbReference>
<dbReference type="Gene3D" id="3.40.1350.10">
    <property type="match status" value="1"/>
</dbReference>
<dbReference type="HAMAP" id="MF_00048">
    <property type="entry name" value="UPF0102"/>
    <property type="match status" value="1"/>
</dbReference>
<dbReference type="InterPro" id="IPR011335">
    <property type="entry name" value="Restrct_endonuc-II-like"/>
</dbReference>
<dbReference type="InterPro" id="IPR011856">
    <property type="entry name" value="tRNA_endonuc-like_dom_sf"/>
</dbReference>
<dbReference type="InterPro" id="IPR003509">
    <property type="entry name" value="UPF0102_YraN-like"/>
</dbReference>
<dbReference type="NCBIfam" id="NF009150">
    <property type="entry name" value="PRK12497.1-3"/>
    <property type="match status" value="1"/>
</dbReference>
<dbReference type="NCBIfam" id="TIGR00252">
    <property type="entry name" value="YraN family protein"/>
    <property type="match status" value="1"/>
</dbReference>
<dbReference type="PANTHER" id="PTHR34039">
    <property type="entry name" value="UPF0102 PROTEIN YRAN"/>
    <property type="match status" value="1"/>
</dbReference>
<dbReference type="PANTHER" id="PTHR34039:SF1">
    <property type="entry name" value="UPF0102 PROTEIN YRAN"/>
    <property type="match status" value="1"/>
</dbReference>
<dbReference type="Pfam" id="PF02021">
    <property type="entry name" value="UPF0102"/>
    <property type="match status" value="1"/>
</dbReference>
<dbReference type="SUPFAM" id="SSF52980">
    <property type="entry name" value="Restriction endonuclease-like"/>
    <property type="match status" value="1"/>
</dbReference>
<organism>
    <name type="scientific">Alkalilimnicola ehrlichii (strain ATCC BAA-1101 / DSM 17681 / MLHE-1)</name>
    <dbReference type="NCBI Taxonomy" id="187272"/>
    <lineage>
        <taxon>Bacteria</taxon>
        <taxon>Pseudomonadati</taxon>
        <taxon>Pseudomonadota</taxon>
        <taxon>Gammaproteobacteria</taxon>
        <taxon>Chromatiales</taxon>
        <taxon>Ectothiorhodospiraceae</taxon>
        <taxon>Alkalilimnicola</taxon>
    </lineage>
</organism>
<name>Y2205_ALKEH</name>
<proteinExistence type="inferred from homology"/>
<reference key="1">
    <citation type="submission" date="2006-08" db="EMBL/GenBank/DDBJ databases">
        <title>Complete sequence of Alkalilimnicola ehrilichei MLHE-1.</title>
        <authorList>
            <person name="Copeland A."/>
            <person name="Lucas S."/>
            <person name="Lapidus A."/>
            <person name="Barry K."/>
            <person name="Detter J.C."/>
            <person name="Glavina del Rio T."/>
            <person name="Hammon N."/>
            <person name="Israni S."/>
            <person name="Dalin E."/>
            <person name="Tice H."/>
            <person name="Pitluck S."/>
            <person name="Sims D."/>
            <person name="Brettin T."/>
            <person name="Bruce D."/>
            <person name="Han C."/>
            <person name="Tapia R."/>
            <person name="Gilna P."/>
            <person name="Schmutz J."/>
            <person name="Larimer F."/>
            <person name="Land M."/>
            <person name="Hauser L."/>
            <person name="Kyrpides N."/>
            <person name="Mikhailova N."/>
            <person name="Oremland R.S."/>
            <person name="Hoeft S.E."/>
            <person name="Switzer-Blum J."/>
            <person name="Kulp T."/>
            <person name="King G."/>
            <person name="Tabita R."/>
            <person name="Witte B."/>
            <person name="Santini J.M."/>
            <person name="Basu P."/>
            <person name="Hollibaugh J.T."/>
            <person name="Xie G."/>
            <person name="Stolz J.F."/>
            <person name="Richardson P."/>
        </authorList>
    </citation>
    <scope>NUCLEOTIDE SEQUENCE [LARGE SCALE GENOMIC DNA]</scope>
    <source>
        <strain>ATCC BAA-1101 / DSM 17681 / MLHE-1</strain>
    </source>
</reference>
<accession>Q0A6J0</accession>
<sequence>MNRRRPSAPAPHLETGNRGERRALEHLTGQGLELLECNFRCRAGEIDLIMRDGEVVVFVEVRVRTHPGYGGALASITPAKQRRLARAAARWLQRHRLTQRAVCRFDVVTFDGERPQWLRHAFTAPG</sequence>
<feature type="chain" id="PRO_0000336116" description="UPF0102 protein Mlg_2205">
    <location>
        <begin position="1"/>
        <end position="126"/>
    </location>
</feature>
<keyword id="KW-1185">Reference proteome</keyword>
<protein>
    <recommendedName>
        <fullName evidence="1">UPF0102 protein Mlg_2205</fullName>
    </recommendedName>
</protein>